<sequence length="299" mass="33108">MSAKPSVGFVNEASRQILAGGSAGLVEICLMHPLDVVKTRFQIQRCTTDPNSYKSLGDSFRMIFRTEGLFGFYKGILPPILAETPKRAVKFFTFEQYKKLLGYVSLSPALTFAVAGLGSGLTEAIVVNPFEVVKVGLQANRNRFTEQPSTMSYARHIIKKEGLGLGGLNKGFTATLGRHGVFNMVYFGFYFNVKNIIPVNKDPTLEFLRKFGIGLLSGTIASVINIPFDVAKSRIQGPQPVPGEIKYKTCFKTMATVYQEEGILALYKGLLPKIMRLGPGGAVMLLVYEYTYSWLQENW</sequence>
<name>ODC_BOVIN</name>
<protein>
    <recommendedName>
        <fullName>Mitochondrial 2-oxodicarboxylate carrier</fullName>
    </recommendedName>
    <alternativeName>
        <fullName>Solute carrier family 25 member 21</fullName>
    </alternativeName>
</protein>
<dbReference type="EMBL" id="BC126566">
    <property type="protein sequence ID" value="AAI26567.1"/>
    <property type="molecule type" value="mRNA"/>
</dbReference>
<dbReference type="RefSeq" id="XP_005222099.1">
    <property type="nucleotide sequence ID" value="XM_005222042.5"/>
</dbReference>
<dbReference type="SMR" id="A0JN87"/>
<dbReference type="FunCoup" id="A0JN87">
    <property type="interactions" value="629"/>
</dbReference>
<dbReference type="STRING" id="9913.ENSBTAP00000043163"/>
<dbReference type="PaxDb" id="9913-ENSBTAP00000043163"/>
<dbReference type="Ensembl" id="ENSBTAT00000100913.1">
    <property type="protein sequence ID" value="ENSBTAP00000081194.1"/>
    <property type="gene ID" value="ENSBTAG00000019350.7"/>
</dbReference>
<dbReference type="GeneID" id="513423"/>
<dbReference type="CTD" id="89874"/>
<dbReference type="VEuPathDB" id="HostDB:ENSBTAG00000019350"/>
<dbReference type="VGNC" id="VGNC:34749">
    <property type="gene designation" value="SLC25A21"/>
</dbReference>
<dbReference type="eggNOG" id="KOG0754">
    <property type="taxonomic scope" value="Eukaryota"/>
</dbReference>
<dbReference type="GeneTree" id="ENSGT00730000111119"/>
<dbReference type="InParanoid" id="A0JN87"/>
<dbReference type="OMA" id="LPFQYQF"/>
<dbReference type="OrthoDB" id="434783at2759"/>
<dbReference type="TreeFam" id="TF314035"/>
<dbReference type="Reactome" id="R-BTA-71064">
    <property type="pathway name" value="Lysine catabolism"/>
</dbReference>
<dbReference type="Proteomes" id="UP000009136">
    <property type="component" value="Chromosome 21"/>
</dbReference>
<dbReference type="Bgee" id="ENSBTAG00000019350">
    <property type="expression patterns" value="Expressed in adult mammalian kidney and 98 other cell types or tissues"/>
</dbReference>
<dbReference type="GO" id="GO:0005743">
    <property type="term" value="C:mitochondrial inner membrane"/>
    <property type="evidence" value="ECO:0007669"/>
    <property type="project" value="UniProtKB-SubCell"/>
</dbReference>
<dbReference type="GO" id="GO:0015297">
    <property type="term" value="F:antiporter activity"/>
    <property type="evidence" value="ECO:0007669"/>
    <property type="project" value="UniProtKB-KW"/>
</dbReference>
<dbReference type="GO" id="GO:0006869">
    <property type="term" value="P:lipid transport"/>
    <property type="evidence" value="ECO:0007669"/>
    <property type="project" value="UniProtKB-KW"/>
</dbReference>
<dbReference type="FunFam" id="1.50.40.10:FF:000048">
    <property type="entry name" value="mitochondrial 2-oxodicarboxylate carrier isoform X2"/>
    <property type="match status" value="1"/>
</dbReference>
<dbReference type="FunFam" id="1.50.40.10:FF:000056">
    <property type="entry name" value="mitochondrial 2-oxodicarboxylate carrier isoform X2"/>
    <property type="match status" value="1"/>
</dbReference>
<dbReference type="Gene3D" id="1.50.40.10">
    <property type="entry name" value="Mitochondrial carrier domain"/>
    <property type="match status" value="2"/>
</dbReference>
<dbReference type="InterPro" id="IPR002067">
    <property type="entry name" value="Mit_carrier"/>
</dbReference>
<dbReference type="InterPro" id="IPR051752">
    <property type="entry name" value="Mito_2-oxodicarb_carrier"/>
</dbReference>
<dbReference type="InterPro" id="IPR018108">
    <property type="entry name" value="Mitochondrial_sb/sol_carrier"/>
</dbReference>
<dbReference type="InterPro" id="IPR023395">
    <property type="entry name" value="Mt_carrier_dom_sf"/>
</dbReference>
<dbReference type="PANTHER" id="PTHR46356">
    <property type="entry name" value="MITOCHONDRIAL 2-OXODICARBOXYLATE CARRIER"/>
    <property type="match status" value="1"/>
</dbReference>
<dbReference type="PANTHER" id="PTHR46356:SF1">
    <property type="entry name" value="MITOCHONDRIAL 2-OXODICARBOXYLATE CARRIER"/>
    <property type="match status" value="1"/>
</dbReference>
<dbReference type="Pfam" id="PF00153">
    <property type="entry name" value="Mito_carr"/>
    <property type="match status" value="3"/>
</dbReference>
<dbReference type="PRINTS" id="PR00926">
    <property type="entry name" value="MITOCARRIER"/>
</dbReference>
<dbReference type="SUPFAM" id="SSF103506">
    <property type="entry name" value="Mitochondrial carrier"/>
    <property type="match status" value="1"/>
</dbReference>
<dbReference type="PROSITE" id="PS50920">
    <property type="entry name" value="SOLCAR"/>
    <property type="match status" value="3"/>
</dbReference>
<organism>
    <name type="scientific">Bos taurus</name>
    <name type="common">Bovine</name>
    <dbReference type="NCBI Taxonomy" id="9913"/>
    <lineage>
        <taxon>Eukaryota</taxon>
        <taxon>Metazoa</taxon>
        <taxon>Chordata</taxon>
        <taxon>Craniata</taxon>
        <taxon>Vertebrata</taxon>
        <taxon>Euteleostomi</taxon>
        <taxon>Mammalia</taxon>
        <taxon>Eutheria</taxon>
        <taxon>Laurasiatheria</taxon>
        <taxon>Artiodactyla</taxon>
        <taxon>Ruminantia</taxon>
        <taxon>Pecora</taxon>
        <taxon>Bovidae</taxon>
        <taxon>Bovinae</taxon>
        <taxon>Bos</taxon>
    </lineage>
</organism>
<reference key="1">
    <citation type="submission" date="2006-10" db="EMBL/GenBank/DDBJ databases">
        <authorList>
            <consortium name="NIH - Mammalian Gene Collection (MGC) project"/>
        </authorList>
    </citation>
    <scope>NUCLEOTIDE SEQUENCE [LARGE SCALE MRNA]</scope>
    <source>
        <strain>Hereford</strain>
        <tissue>Fetal liver</tissue>
    </source>
</reference>
<comment type="function">
    <text evidence="2">Transports dicarboxylates across the inner membranes of mitochondria by a counter-exchange mechanism. Can transport 2-oxoadipate (2-oxohexanedioate), 2-oxoglutarate, adipate (hexanedioate), glutarate, and to a lesser extent, pimelate (heptanedioate), 2-oxopimelate (2-oxoheptanedioate), 2-aminoadipate (2-aminohexanedioate), oxaloacetate, and citrate. Plays a central role in catabolism of lysine, hydroxylysine, and tryptophan, by transporting common metabolite intermediates (such as 2-oxoadipate) into the mitochondria, where it is converted into acetyl-CoA and can enter the citric acid (TCA) cycle.</text>
</comment>
<comment type="catalytic activity">
    <reaction evidence="2">
        <text>2-oxoadipate(in) + 2-oxoglutarate(out) = 2-oxoadipate(out) + 2-oxoglutarate(in)</text>
        <dbReference type="Rhea" id="RHEA:71739"/>
        <dbReference type="ChEBI" id="CHEBI:16810"/>
        <dbReference type="ChEBI" id="CHEBI:57499"/>
    </reaction>
</comment>
<comment type="catalytic activity">
    <reaction evidence="2">
        <text>hexanedioate(in) + 2-oxoglutarate(out) = hexanedioate(out) + 2-oxoglutarate(in)</text>
        <dbReference type="Rhea" id="RHEA:71743"/>
        <dbReference type="ChEBI" id="CHEBI:16810"/>
        <dbReference type="ChEBI" id="CHEBI:17128"/>
    </reaction>
</comment>
<comment type="catalytic activity">
    <reaction evidence="2">
        <text>L-2-aminoadipate(in) + 2-oxoglutarate(out) = L-2-aminoadipate(out) + 2-oxoglutarate(in)</text>
        <dbReference type="Rhea" id="RHEA:71747"/>
        <dbReference type="ChEBI" id="CHEBI:16810"/>
        <dbReference type="ChEBI" id="CHEBI:58672"/>
    </reaction>
</comment>
<comment type="catalytic activity">
    <reaction evidence="2">
        <text>glutarate(in) + 2-oxoglutarate(out) = glutarate(out) + 2-oxoglutarate(in)</text>
        <dbReference type="Rhea" id="RHEA:71751"/>
        <dbReference type="ChEBI" id="CHEBI:16810"/>
        <dbReference type="ChEBI" id="CHEBI:30921"/>
    </reaction>
</comment>
<comment type="catalytic activity">
    <reaction evidence="2">
        <text>2-oxoheptanedioate(in) + 2-oxoglutarate(out) = 2-oxoheptanedioate(out) + 2-oxoglutarate(in)</text>
        <dbReference type="Rhea" id="RHEA:71755"/>
        <dbReference type="ChEBI" id="CHEBI:16810"/>
        <dbReference type="ChEBI" id="CHEBI:72701"/>
    </reaction>
</comment>
<comment type="catalytic activity">
    <reaction evidence="2">
        <text>heptanedioate(in) + 2-oxoglutarate(out) = heptanedioate(out) + 2-oxoglutarate(in)</text>
        <dbReference type="Rhea" id="RHEA:71759"/>
        <dbReference type="ChEBI" id="CHEBI:16810"/>
        <dbReference type="ChEBI" id="CHEBI:36165"/>
    </reaction>
</comment>
<comment type="catalytic activity">
    <reaction evidence="2">
        <text>citrate(in) + 2-oxoglutarate(out) = citrate(out) + 2-oxoglutarate(in)</text>
        <dbReference type="Rhea" id="RHEA:71763"/>
        <dbReference type="ChEBI" id="CHEBI:16810"/>
        <dbReference type="ChEBI" id="CHEBI:16947"/>
    </reaction>
</comment>
<comment type="subcellular location">
    <subcellularLocation>
        <location evidence="1">Mitochondrion inner membrane</location>
        <topology evidence="1">Multi-pass membrane protein</topology>
    </subcellularLocation>
</comment>
<comment type="similarity">
    <text evidence="4">Belongs to the mitochondrial carrier (TC 2.A.29) family.</text>
</comment>
<keyword id="KW-0050">Antiport</keyword>
<keyword id="KW-0445">Lipid transport</keyword>
<keyword id="KW-0472">Membrane</keyword>
<keyword id="KW-0496">Mitochondrion</keyword>
<keyword id="KW-0999">Mitochondrion inner membrane</keyword>
<keyword id="KW-1185">Reference proteome</keyword>
<keyword id="KW-0677">Repeat</keyword>
<keyword id="KW-0812">Transmembrane</keyword>
<keyword id="KW-1133">Transmembrane helix</keyword>
<keyword id="KW-0813">Transport</keyword>
<gene>
    <name type="primary">SLC25A21</name>
    <name type="synonym">ODC</name>
</gene>
<accession>A0JN87</accession>
<proteinExistence type="evidence at transcript level"/>
<feature type="chain" id="PRO_0000285598" description="Mitochondrial 2-oxodicarboxylate carrier">
    <location>
        <begin position="1"/>
        <end position="299"/>
    </location>
</feature>
<feature type="transmembrane region" description="Helical; Name=1" evidence="3">
    <location>
        <begin position="17"/>
        <end position="37"/>
    </location>
</feature>
<feature type="transmembrane region" description="Helical; Name=2" evidence="3">
    <location>
        <begin position="62"/>
        <end position="82"/>
    </location>
</feature>
<feature type="transmembrane region" description="Helical; Name=3" evidence="3">
    <location>
        <begin position="100"/>
        <end position="120"/>
    </location>
</feature>
<feature type="transmembrane region" description="Helical; Name=4" evidence="3">
    <location>
        <begin position="179"/>
        <end position="199"/>
    </location>
</feature>
<feature type="transmembrane region" description="Helical; Name=5" evidence="3">
    <location>
        <begin position="211"/>
        <end position="231"/>
    </location>
</feature>
<feature type="transmembrane region" description="Helical; Name=6" evidence="3">
    <location>
        <begin position="274"/>
        <end position="290"/>
    </location>
</feature>
<feature type="repeat" description="Solcar 1">
    <location>
        <begin position="11"/>
        <end position="100"/>
    </location>
</feature>
<feature type="repeat" description="Solcar 2">
    <location>
        <begin position="107"/>
        <end position="196"/>
    </location>
</feature>
<feature type="repeat" description="Solcar 3">
    <location>
        <begin position="205"/>
        <end position="294"/>
    </location>
</feature>
<evidence type="ECO:0000250" key="1"/>
<evidence type="ECO:0000250" key="2">
    <source>
        <dbReference type="UniProtKB" id="Q9BQT8"/>
    </source>
</evidence>
<evidence type="ECO:0000255" key="3"/>
<evidence type="ECO:0000305" key="4"/>